<dbReference type="EMBL" id="AE005176">
    <property type="protein sequence ID" value="AAK05060.1"/>
    <property type="molecule type" value="Genomic_DNA"/>
</dbReference>
<dbReference type="PIR" id="B86745">
    <property type="entry name" value="B86745"/>
</dbReference>
<dbReference type="RefSeq" id="NP_267118.1">
    <property type="nucleotide sequence ID" value="NC_002662.1"/>
</dbReference>
<dbReference type="RefSeq" id="WP_010905658.1">
    <property type="nucleotide sequence ID" value="NC_002662.1"/>
</dbReference>
<dbReference type="SMR" id="Q9CGY0"/>
<dbReference type="PaxDb" id="272623-L189428"/>
<dbReference type="EnsemblBacteria" id="AAK05060">
    <property type="protein sequence ID" value="AAK05060"/>
    <property type="gene ID" value="L189428"/>
</dbReference>
<dbReference type="KEGG" id="lla:L189428"/>
<dbReference type="PATRIC" id="fig|272623.7.peg.1029"/>
<dbReference type="eggNOG" id="COG0391">
    <property type="taxonomic scope" value="Bacteria"/>
</dbReference>
<dbReference type="HOGENOM" id="CLU_044041_0_1_9"/>
<dbReference type="OrthoDB" id="9783842at2"/>
<dbReference type="Proteomes" id="UP000002196">
    <property type="component" value="Chromosome"/>
</dbReference>
<dbReference type="GO" id="GO:0005737">
    <property type="term" value="C:cytoplasm"/>
    <property type="evidence" value="ECO:0007669"/>
    <property type="project" value="UniProtKB-SubCell"/>
</dbReference>
<dbReference type="GO" id="GO:0043743">
    <property type="term" value="F:LPPG:FO 2-phospho-L-lactate transferase activity"/>
    <property type="evidence" value="ECO:0007669"/>
    <property type="project" value="InterPro"/>
</dbReference>
<dbReference type="GO" id="GO:0008360">
    <property type="term" value="P:regulation of cell shape"/>
    <property type="evidence" value="ECO:0007669"/>
    <property type="project" value="UniProtKB-UniRule"/>
</dbReference>
<dbReference type="CDD" id="cd07044">
    <property type="entry name" value="CofD_YvcK"/>
    <property type="match status" value="1"/>
</dbReference>
<dbReference type="Gene3D" id="3.40.50.10680">
    <property type="entry name" value="CofD-like domains"/>
    <property type="match status" value="1"/>
</dbReference>
<dbReference type="HAMAP" id="MF_00973">
    <property type="entry name" value="Gluconeogen_factor"/>
    <property type="match status" value="1"/>
</dbReference>
<dbReference type="InterPro" id="IPR002882">
    <property type="entry name" value="CofD"/>
</dbReference>
<dbReference type="InterPro" id="IPR038136">
    <property type="entry name" value="CofD-like_dom_sf"/>
</dbReference>
<dbReference type="InterPro" id="IPR010119">
    <property type="entry name" value="Gluconeogen_factor"/>
</dbReference>
<dbReference type="NCBIfam" id="TIGR01826">
    <property type="entry name" value="CofD_related"/>
    <property type="match status" value="1"/>
</dbReference>
<dbReference type="PANTHER" id="PTHR30135:SF3">
    <property type="entry name" value="GLUCONEOGENESIS FACTOR-RELATED"/>
    <property type="match status" value="1"/>
</dbReference>
<dbReference type="PANTHER" id="PTHR30135">
    <property type="entry name" value="UNCHARACTERIZED PROTEIN YVCK-RELATED"/>
    <property type="match status" value="1"/>
</dbReference>
<dbReference type="Pfam" id="PF01933">
    <property type="entry name" value="CofD"/>
    <property type="match status" value="1"/>
</dbReference>
<dbReference type="SUPFAM" id="SSF142338">
    <property type="entry name" value="CofD-like"/>
    <property type="match status" value="1"/>
</dbReference>
<sequence>MSNPKVVVIGGGTGIPVVLKALRKEKIDLTAIVTVADDGGSSGRIRSAVNIAPPGDLRNVLIAMSDMPKFYADILQYRFDKSDGELAGHPLGNLIIAAVSEMQGSTYRAIQTLAQFFHVEGKIYPSSDAALTLHAVFKDGHEVLGESHIASYKGLIDHVYLTQTASGDSPVASKNVVKSIMEADTIVLGPGSLFTSILPNIVIPEICEALWKTSAKIVYVCNIMTQRGETEHFSDADHVRVLNEHIGTKVIDTVLVNIQEVPEEYMNTNKFDEYLVQVDHDFEALKAEEVNVISNNFLELRDGGAFHNGEAVAKEIVAISQRQEFRH</sequence>
<keyword id="KW-0963">Cytoplasm</keyword>
<keyword id="KW-1185">Reference proteome</keyword>
<name>GNGF_LACLA</name>
<organism>
    <name type="scientific">Lactococcus lactis subsp. lactis (strain IL1403)</name>
    <name type="common">Streptococcus lactis</name>
    <dbReference type="NCBI Taxonomy" id="272623"/>
    <lineage>
        <taxon>Bacteria</taxon>
        <taxon>Bacillati</taxon>
        <taxon>Bacillota</taxon>
        <taxon>Bacilli</taxon>
        <taxon>Lactobacillales</taxon>
        <taxon>Streptococcaceae</taxon>
        <taxon>Lactococcus</taxon>
    </lineage>
</organism>
<proteinExistence type="inferred from homology"/>
<accession>Q9CGY0</accession>
<reference key="1">
    <citation type="journal article" date="2001" name="Genome Res.">
        <title>The complete genome sequence of the lactic acid bacterium Lactococcus lactis ssp. lactis IL1403.</title>
        <authorList>
            <person name="Bolotin A."/>
            <person name="Wincker P."/>
            <person name="Mauger S."/>
            <person name="Jaillon O."/>
            <person name="Malarme K."/>
            <person name="Weissenbach J."/>
            <person name="Ehrlich S.D."/>
            <person name="Sorokin A."/>
        </authorList>
    </citation>
    <scope>NUCLEOTIDE SEQUENCE [LARGE SCALE GENOMIC DNA]</scope>
    <source>
        <strain>IL1403</strain>
    </source>
</reference>
<comment type="function">
    <text evidence="1">Required for morphogenesis under gluconeogenic growth conditions.</text>
</comment>
<comment type="subcellular location">
    <subcellularLocation>
        <location evidence="1">Cytoplasm</location>
    </subcellularLocation>
</comment>
<comment type="similarity">
    <text evidence="1">Belongs to the gluconeogenesis factor family.</text>
</comment>
<feature type="chain" id="PRO_0000107807" description="Putative gluconeogenesis factor">
    <location>
        <begin position="1"/>
        <end position="327"/>
    </location>
</feature>
<gene>
    <name type="primary">yjiF</name>
    <name type="ordered locus">LL0962</name>
    <name type="ORF">L189428</name>
</gene>
<evidence type="ECO:0000255" key="1">
    <source>
        <dbReference type="HAMAP-Rule" id="MF_00973"/>
    </source>
</evidence>
<protein>
    <recommendedName>
        <fullName evidence="1">Putative gluconeogenesis factor</fullName>
    </recommendedName>
</protein>